<accession>Q9XDP1</accession>
<gene>
    <name evidence="1" type="primary">dsbL</name>
    <name type="synonym">dsbA</name>
</gene>
<name>DSBL_LELAM</name>
<feature type="signal peptide" evidence="1">
    <location>
        <begin position="1"/>
        <end position="27"/>
    </location>
</feature>
<feature type="chain" id="PRO_0000034257" description="Thiol:disulfide interchange protein DsbL">
    <location>
        <begin position="28"/>
        <end position="222"/>
    </location>
</feature>
<feature type="domain" description="Thioredoxin">
    <location>
        <begin position="28"/>
        <end position="221"/>
    </location>
</feature>
<feature type="disulfide bond" description="Redox-active" evidence="1">
    <location>
        <begin position="56"/>
        <end position="59"/>
    </location>
</feature>
<sequence>MSAKWINSIFKSVVLTAALALPFTASAFTEGTDYMVLEKPIPDADKTLIKVFSYACPFCYKYDKAVTGPVADKVADLVTFVPFHLETKGEYGKQASELFAVTMAKDKAAGVSLFDEKSQFKKAKFAWYAAYHDKKERWSDGKDPAAFLKTGLDAAGMSQAEFEAALKEPAVQQTLQKWKAAYEVAKIQGVPAYVVNGKYLIYTKNIKSIDSMAQLVRELATK</sequence>
<keyword id="KW-1015">Disulfide bond</keyword>
<keyword id="KW-0574">Periplasm</keyword>
<keyword id="KW-0676">Redox-active center</keyword>
<keyword id="KW-0732">Signal</keyword>
<organism>
    <name type="scientific">Lelliottia amnigena</name>
    <name type="common">Enterobacter amnigenus</name>
    <dbReference type="NCBI Taxonomy" id="61646"/>
    <lineage>
        <taxon>Bacteria</taxon>
        <taxon>Pseudomonadati</taxon>
        <taxon>Pseudomonadota</taxon>
        <taxon>Gammaproteobacteria</taxon>
        <taxon>Enterobacterales</taxon>
        <taxon>Enterobacteriaceae</taxon>
        <taxon>Lelliottia</taxon>
    </lineage>
</organism>
<comment type="function">
    <text evidence="1">Involved in disulfide-bond formation. Acts by transferring its disulfide bond to other proteins. Part of a redox system composed of DsbI and DsbL that mediates formation of an essential disulfide bond in AssT.</text>
</comment>
<comment type="subunit">
    <text evidence="1">Interacts with DsbI.</text>
</comment>
<comment type="subcellular location">
    <subcellularLocation>
        <location evidence="1">Periplasm</location>
    </subcellularLocation>
</comment>
<comment type="similarity">
    <text evidence="1">Belongs to the thioredoxin family. DsbL subfamily.</text>
</comment>
<reference key="1">
    <citation type="journal article" date="1999" name="Protein Expr. Purif.">
        <title>Molecular cloning of the arylsulfate sulfotransferase gene and characterization of its product from Enterobacter amnigenus AR-37.</title>
        <authorList>
            <person name="Kwon A.-R."/>
            <person name="Oh T.-G."/>
            <person name="Kim D.-H."/>
            <person name="Choi E.-C."/>
        </authorList>
    </citation>
    <scope>NUCLEOTIDE SEQUENCE [GENOMIC DNA]</scope>
    <source>
        <strain>AR-37</strain>
    </source>
</reference>
<evidence type="ECO:0000255" key="1">
    <source>
        <dbReference type="HAMAP-Rule" id="MF_00932"/>
    </source>
</evidence>
<proteinExistence type="inferred from homology"/>
<protein>
    <recommendedName>
        <fullName evidence="1">Thiol:disulfide interchange protein DsbL</fullName>
    </recommendedName>
</protein>
<dbReference type="EMBL" id="AF012826">
    <property type="protein sequence ID" value="AAD41461.1"/>
    <property type="molecule type" value="Genomic_DNA"/>
</dbReference>
<dbReference type="SMR" id="Q9XDP1"/>
<dbReference type="GO" id="GO:0042597">
    <property type="term" value="C:periplasmic space"/>
    <property type="evidence" value="ECO:0007669"/>
    <property type="project" value="UniProtKB-SubCell"/>
</dbReference>
<dbReference type="GO" id="GO:0015035">
    <property type="term" value="F:protein-disulfide reductase activity"/>
    <property type="evidence" value="ECO:0007669"/>
    <property type="project" value="UniProtKB-UniRule"/>
</dbReference>
<dbReference type="CDD" id="cd03019">
    <property type="entry name" value="DsbA_DsbA"/>
    <property type="match status" value="1"/>
</dbReference>
<dbReference type="Gene3D" id="3.40.30.10">
    <property type="entry name" value="Glutaredoxin"/>
    <property type="match status" value="1"/>
</dbReference>
<dbReference type="HAMAP" id="MF_00932">
    <property type="entry name" value="DsbL"/>
    <property type="match status" value="1"/>
</dbReference>
<dbReference type="InterPro" id="IPR001853">
    <property type="entry name" value="DSBA-like_thioredoxin_dom"/>
</dbReference>
<dbReference type="InterPro" id="IPR023205">
    <property type="entry name" value="DsbA/DsbL"/>
</dbReference>
<dbReference type="InterPro" id="IPR028588">
    <property type="entry name" value="DsbL"/>
</dbReference>
<dbReference type="InterPro" id="IPR050824">
    <property type="entry name" value="Thiol_disulfide_DsbA"/>
</dbReference>
<dbReference type="InterPro" id="IPR036249">
    <property type="entry name" value="Thioredoxin-like_sf"/>
</dbReference>
<dbReference type="InterPro" id="IPR013766">
    <property type="entry name" value="Thioredoxin_domain"/>
</dbReference>
<dbReference type="PANTHER" id="PTHR35891">
    <property type="entry name" value="THIOL:DISULFIDE INTERCHANGE PROTEIN DSBA"/>
    <property type="match status" value="1"/>
</dbReference>
<dbReference type="PANTHER" id="PTHR35891:SF3">
    <property type="entry name" value="THIOL:DISULFIDE INTERCHANGE PROTEIN DSBL"/>
    <property type="match status" value="1"/>
</dbReference>
<dbReference type="Pfam" id="PF01323">
    <property type="entry name" value="DSBA"/>
    <property type="match status" value="1"/>
</dbReference>
<dbReference type="PIRSF" id="PIRSF001488">
    <property type="entry name" value="Tdi_protein"/>
    <property type="match status" value="1"/>
</dbReference>
<dbReference type="SUPFAM" id="SSF52833">
    <property type="entry name" value="Thioredoxin-like"/>
    <property type="match status" value="1"/>
</dbReference>
<dbReference type="PROSITE" id="PS51352">
    <property type="entry name" value="THIOREDOXIN_2"/>
    <property type="match status" value="1"/>
</dbReference>